<organism>
    <name type="scientific">Metarhizium anisopliae</name>
    <name type="common">Entomophthora anisopliae</name>
    <dbReference type="NCBI Taxonomy" id="5530"/>
    <lineage>
        <taxon>Eukaryota</taxon>
        <taxon>Fungi</taxon>
        <taxon>Dikarya</taxon>
        <taxon>Ascomycota</taxon>
        <taxon>Pezizomycotina</taxon>
        <taxon>Sordariomycetes</taxon>
        <taxon>Hypocreomycetidae</taxon>
        <taxon>Hypocreales</taxon>
        <taxon>Clavicipitaceae</taxon>
        <taxon>Metarhizium</taxon>
    </lineage>
</organism>
<protein>
    <recommendedName>
        <fullName>Endochitinase 3</fullName>
        <ecNumber>3.2.1.14</ecNumber>
    </recommendedName>
    <alternativeName>
        <fullName>Chitinase 3</fullName>
    </alternativeName>
</protein>
<dbReference type="EC" id="3.2.1.14"/>
<dbReference type="EMBL" id="AY545982">
    <property type="protein sequence ID" value="AAS55554.1"/>
    <property type="molecule type" value="mRNA"/>
</dbReference>
<dbReference type="SMR" id="Q6QDR4"/>
<dbReference type="CAZy" id="GH18">
    <property type="family name" value="Glycoside Hydrolase Family 18"/>
</dbReference>
<dbReference type="GlyCosmos" id="Q6QDR4">
    <property type="glycosylation" value="3 sites, No reported glycans"/>
</dbReference>
<dbReference type="VEuPathDB" id="FungiDB:MAN_05179"/>
<dbReference type="GO" id="GO:0005576">
    <property type="term" value="C:extracellular region"/>
    <property type="evidence" value="ECO:0007669"/>
    <property type="project" value="UniProtKB-SubCell"/>
</dbReference>
<dbReference type="GO" id="GO:0008061">
    <property type="term" value="F:chitin binding"/>
    <property type="evidence" value="ECO:0007669"/>
    <property type="project" value="UniProtKB-KW"/>
</dbReference>
<dbReference type="GO" id="GO:0008843">
    <property type="term" value="F:endochitinase activity"/>
    <property type="evidence" value="ECO:0007669"/>
    <property type="project" value="UniProtKB-EC"/>
</dbReference>
<dbReference type="GO" id="GO:0006032">
    <property type="term" value="P:chitin catabolic process"/>
    <property type="evidence" value="ECO:0007669"/>
    <property type="project" value="UniProtKB-KW"/>
</dbReference>
<dbReference type="GO" id="GO:0000272">
    <property type="term" value="P:polysaccharide catabolic process"/>
    <property type="evidence" value="ECO:0007669"/>
    <property type="project" value="UniProtKB-KW"/>
</dbReference>
<dbReference type="CDD" id="cd02877">
    <property type="entry name" value="GH18_hevamine_XipI_class_III"/>
    <property type="match status" value="1"/>
</dbReference>
<dbReference type="Gene3D" id="3.20.20.80">
    <property type="entry name" value="Glycosidases"/>
    <property type="match status" value="1"/>
</dbReference>
<dbReference type="InterPro" id="IPR045321">
    <property type="entry name" value="Cts1-like"/>
</dbReference>
<dbReference type="InterPro" id="IPR001223">
    <property type="entry name" value="Glyco_hydro18_cat"/>
</dbReference>
<dbReference type="InterPro" id="IPR001579">
    <property type="entry name" value="Glyco_hydro_18_chit_AS"/>
</dbReference>
<dbReference type="InterPro" id="IPR017853">
    <property type="entry name" value="Glycoside_hydrolase_SF"/>
</dbReference>
<dbReference type="InterPro" id="IPR050542">
    <property type="entry name" value="Glycosyl_Hydrlase18_Chitinase"/>
</dbReference>
<dbReference type="PANTHER" id="PTHR45708">
    <property type="entry name" value="ENDOCHITINASE"/>
    <property type="match status" value="1"/>
</dbReference>
<dbReference type="PANTHER" id="PTHR45708:SF49">
    <property type="entry name" value="ENDOCHITINASE"/>
    <property type="match status" value="1"/>
</dbReference>
<dbReference type="Pfam" id="PF00704">
    <property type="entry name" value="Glyco_hydro_18"/>
    <property type="match status" value="1"/>
</dbReference>
<dbReference type="SUPFAM" id="SSF51445">
    <property type="entry name" value="(Trans)glycosidases"/>
    <property type="match status" value="1"/>
</dbReference>
<dbReference type="PROSITE" id="PS01095">
    <property type="entry name" value="GH18_1"/>
    <property type="match status" value="1"/>
</dbReference>
<dbReference type="PROSITE" id="PS51910">
    <property type="entry name" value="GH18_2"/>
    <property type="match status" value="1"/>
</dbReference>
<feature type="chain" id="PRO_0000429868" description="Endochitinase 3">
    <location>
        <begin position="1"/>
        <end position="296"/>
    </location>
</feature>
<feature type="domain" description="GH18" evidence="2">
    <location>
        <begin position="12"/>
        <end position="296"/>
    </location>
</feature>
<feature type="active site" description="Proton donor" evidence="2">
    <location>
        <position position="153"/>
    </location>
</feature>
<feature type="glycosylation site" description="N-linked (GlcNAc...) asparagine" evidence="1">
    <location>
        <position position="32"/>
    </location>
</feature>
<feature type="glycosylation site" description="N-linked (GlcNAc...) asparagine" evidence="1">
    <location>
        <position position="152"/>
    </location>
</feature>
<feature type="glycosylation site" description="N-linked (GlcNAc...) asparagine" evidence="1">
    <location>
        <position position="228"/>
    </location>
</feature>
<feature type="non-terminal residue">
    <location>
        <position position="1"/>
    </location>
</feature>
<keyword id="KW-0119">Carbohydrate metabolism</keyword>
<keyword id="KW-0146">Chitin degradation</keyword>
<keyword id="KW-0147">Chitin-binding</keyword>
<keyword id="KW-0325">Glycoprotein</keyword>
<keyword id="KW-0326">Glycosidase</keyword>
<keyword id="KW-0378">Hydrolase</keyword>
<keyword id="KW-0624">Polysaccharide degradation</keyword>
<keyword id="KW-0964">Secreted</keyword>
<keyword id="KW-0843">Virulence</keyword>
<reference key="1">
    <citation type="journal article" date="1997" name="Can. J. Microbiol.">
        <title>Purification and characterization of an extracellular chitinase from the entomopathogen Metarhizium anisopliae.</title>
        <authorList>
            <person name="Pinto A.S."/>
            <person name="Barreto C.C."/>
            <person name="Schrank A."/>
            <person name="Ulhoa C.J."/>
            <person name="Vainstein M.H."/>
        </authorList>
    </citation>
    <scope>NUCLEOTIDE SEQUENCE [MRNA]</scope>
    <scope>SUBCELLULAR LOCATION</scope>
    <scope>FUNCTION</scope>
    <scope>CATALYTIC ACTIVITY</scope>
    <scope>BIOPHYSICOCHEMICAL PROPERTIES</scope>
    <source>
        <strain>E6</strain>
    </source>
</reference>
<reference key="2">
    <citation type="journal article" date="2005" name="Res. Microbiol.">
        <title>Cuticle-induced endo/exoacting chitinase CHIT30 from Metarhizium anisopliae is encoded by an ortholog of the chi3 gene.</title>
        <authorList>
            <person name="da Silva M.V."/>
            <person name="Santi L."/>
            <person name="Staats C.C."/>
            <person name="da Costa A.M."/>
            <person name="Colodel E.M."/>
            <person name="Driemeier D."/>
            <person name="Vainstein M.H."/>
            <person name="Schrank A."/>
        </authorList>
    </citation>
    <scope>NUCLEOTIDE SEQUENCE [MRNA]</scope>
    <scope>INDUCTION</scope>
    <scope>SUBCELLULAR LOCATION</scope>
    <scope>FUNCTION</scope>
    <scope>CATALYTIC ACTIVITY</scope>
    <source>
        <strain>E6</strain>
    </source>
</reference>
<reference key="3">
    <citation type="journal article" date="2013" name="Fungal Biol.">
        <title>Metarhizium anisopliae chitinase CHIT30 is involved in heat-shock stress and contributes to virulence against Dysdercus peruvianus.</title>
        <authorList>
            <person name="Staats C.C."/>
            <person name="Kmetzsch L."/>
            <person name="Lubeck I."/>
            <person name="Junges A."/>
            <person name="Vainstein M.H."/>
            <person name="Schrank A."/>
        </authorList>
    </citation>
    <scope>FUNCTION</scope>
    <scope>INDUCTION</scope>
    <scope>DISRUPTION PHENOTYPE</scope>
    <scope>CATALYTIC ACTIVITY</scope>
</reference>
<gene>
    <name type="primary">chi3</name>
    <name type="synonym">CHIT30</name>
</gene>
<proteinExistence type="evidence at protein level"/>
<evidence type="ECO:0000255" key="1"/>
<evidence type="ECO:0000255" key="2">
    <source>
        <dbReference type="PROSITE-ProRule" id="PRU01258"/>
    </source>
</evidence>
<evidence type="ECO:0000269" key="3">
    <source>
    </source>
</evidence>
<evidence type="ECO:0000269" key="4">
    <source>
    </source>
</evidence>
<evidence type="ECO:0000269" key="5">
    <source ref="1"/>
</evidence>
<evidence type="ECO:0000305" key="6"/>
<comment type="function">
    <text evidence="3 4 5">Secreted chitinase involved in the degradation of chitin, a component of the cell walls of fungi and exoskeletal elements of some animals (including worms and arthropods). Participates in the infection process and directly acts in the penetration process of the host cuticle. Involved in heat-shock adaptation.</text>
</comment>
<comment type="catalytic activity">
    <reaction evidence="3 4 5">
        <text>Random endo-hydrolysis of N-acetyl-beta-D-glucosaminide (1-&gt;4)-beta-linkages in chitin and chitodextrins.</text>
        <dbReference type="EC" id="3.2.1.14"/>
    </reaction>
</comment>
<comment type="biophysicochemical properties">
    <kinetics>
        <KM evidence="5">0.537 mM for p-nitrophenyl beta-N-diacetylchitobiose</KM>
        <Vmax evidence="5">4.86 nmol/min/mg enzyme toward p-nitrophenyl beta-N-diacetylchitobiose</Vmax>
    </kinetics>
    <phDependence>
        <text evidence="5">Optimum pH is 4.5-5.0.</text>
    </phDependence>
    <temperatureDependence>
        <text evidence="5">Optimum temperature is 40-45 degrees Celsius.</text>
    </temperatureDependence>
</comment>
<comment type="subcellular location">
    <subcellularLocation>
        <location>Secreted</location>
    </subcellularLocation>
</comment>
<comment type="induction">
    <text evidence="3 4">Induced by chitin and cuticle and repressed by glucose. Protein expression is increased after host tick Boophilus microplus infection. Also accumulates in response to heat-shock stress conditions.</text>
</comment>
<comment type="disruption phenotype">
    <text evidence="4">Leads to decreased endochitinase and exochitinase activities following heat-shock treatment.</text>
</comment>
<comment type="similarity">
    <text evidence="6">Belongs to the glycosyl hydrolase 18 family. Chitinase class III subfamily.</text>
</comment>
<sequence>QAAPDEGRASGHKLTVYWGAEDDTTTLDDVCNDSSYDVVNLAFLSHFFSAGGYPKMSIGNLDGPSQAQKKAGATGLQDGSSLVKSIKNCQSKGKPVILSMGGATDYSDVQLNSDAQGQQIANTVWNLFLGGTDHKELRPFGDVKLDGVDLDNETNDGTGYLAMTKQFKANFQKDTSKKYYITAAPQCPYPDQSEPLDVCQLLDWVQVQFYNNGNCNIAQRGFAKAVKNWSKGIGSGVQLYIGALASGADGDEGYVHAATLNRAVNQVKAMNLPNFGGAMLWEAHSAVKNGQLPEED</sequence>
<name>CHI3_METAN</name>
<accession>Q6QDR4</accession>